<protein>
    <recommendedName>
        <fullName evidence="1">Lipoyl synthase</fullName>
        <ecNumber evidence="1">2.8.1.8</ecNumber>
    </recommendedName>
    <alternativeName>
        <fullName evidence="1">Lip-syn</fullName>
        <shortName evidence="1">LS</shortName>
    </alternativeName>
    <alternativeName>
        <fullName evidence="1">Lipoate synthase</fullName>
    </alternativeName>
    <alternativeName>
        <fullName evidence="1">Lipoic acid synthase</fullName>
    </alternativeName>
    <alternativeName>
        <fullName evidence="1">Sulfur insertion protein LipA</fullName>
    </alternativeName>
</protein>
<proteinExistence type="inferred from homology"/>
<keyword id="KW-0004">4Fe-4S</keyword>
<keyword id="KW-0963">Cytoplasm</keyword>
<keyword id="KW-0408">Iron</keyword>
<keyword id="KW-0411">Iron-sulfur</keyword>
<keyword id="KW-0479">Metal-binding</keyword>
<keyword id="KW-1185">Reference proteome</keyword>
<keyword id="KW-0949">S-adenosyl-L-methionine</keyword>
<keyword id="KW-0808">Transferase</keyword>
<feature type="chain" id="PRO_1000012274" description="Lipoyl synthase">
    <location>
        <begin position="1"/>
        <end position="321"/>
    </location>
</feature>
<feature type="domain" description="Radical SAM core" evidence="2">
    <location>
        <begin position="80"/>
        <end position="297"/>
    </location>
</feature>
<feature type="binding site" evidence="1">
    <location>
        <position position="68"/>
    </location>
    <ligand>
        <name>[4Fe-4S] cluster</name>
        <dbReference type="ChEBI" id="CHEBI:49883"/>
        <label>1</label>
    </ligand>
</feature>
<feature type="binding site" evidence="1">
    <location>
        <position position="73"/>
    </location>
    <ligand>
        <name>[4Fe-4S] cluster</name>
        <dbReference type="ChEBI" id="CHEBI:49883"/>
        <label>1</label>
    </ligand>
</feature>
<feature type="binding site" evidence="1">
    <location>
        <position position="79"/>
    </location>
    <ligand>
        <name>[4Fe-4S] cluster</name>
        <dbReference type="ChEBI" id="CHEBI:49883"/>
        <label>1</label>
    </ligand>
</feature>
<feature type="binding site" evidence="1">
    <location>
        <position position="94"/>
    </location>
    <ligand>
        <name>[4Fe-4S] cluster</name>
        <dbReference type="ChEBI" id="CHEBI:49883"/>
        <label>2</label>
        <note>4Fe-4S-S-AdoMet</note>
    </ligand>
</feature>
<feature type="binding site" evidence="1">
    <location>
        <position position="98"/>
    </location>
    <ligand>
        <name>[4Fe-4S] cluster</name>
        <dbReference type="ChEBI" id="CHEBI:49883"/>
        <label>2</label>
        <note>4Fe-4S-S-AdoMet</note>
    </ligand>
</feature>
<feature type="binding site" evidence="1">
    <location>
        <position position="101"/>
    </location>
    <ligand>
        <name>[4Fe-4S] cluster</name>
        <dbReference type="ChEBI" id="CHEBI:49883"/>
        <label>2</label>
        <note>4Fe-4S-S-AdoMet</note>
    </ligand>
</feature>
<feature type="binding site" evidence="1">
    <location>
        <position position="308"/>
    </location>
    <ligand>
        <name>[4Fe-4S] cluster</name>
        <dbReference type="ChEBI" id="CHEBI:49883"/>
        <label>1</label>
    </ligand>
</feature>
<accession>Q12QX1</accession>
<dbReference type="EC" id="2.8.1.8" evidence="1"/>
<dbReference type="EMBL" id="CP000302">
    <property type="protein sequence ID" value="ABE54155.1"/>
    <property type="molecule type" value="Genomic_DNA"/>
</dbReference>
<dbReference type="RefSeq" id="WP_011495320.1">
    <property type="nucleotide sequence ID" value="NC_007954.1"/>
</dbReference>
<dbReference type="SMR" id="Q12QX1"/>
<dbReference type="STRING" id="318161.Sden_0867"/>
<dbReference type="KEGG" id="sdn:Sden_0867"/>
<dbReference type="eggNOG" id="COG0320">
    <property type="taxonomic scope" value="Bacteria"/>
</dbReference>
<dbReference type="HOGENOM" id="CLU_033144_2_1_6"/>
<dbReference type="OrthoDB" id="9787898at2"/>
<dbReference type="UniPathway" id="UPA00538">
    <property type="reaction ID" value="UER00593"/>
</dbReference>
<dbReference type="Proteomes" id="UP000001982">
    <property type="component" value="Chromosome"/>
</dbReference>
<dbReference type="GO" id="GO:0005737">
    <property type="term" value="C:cytoplasm"/>
    <property type="evidence" value="ECO:0007669"/>
    <property type="project" value="UniProtKB-SubCell"/>
</dbReference>
<dbReference type="GO" id="GO:0051539">
    <property type="term" value="F:4 iron, 4 sulfur cluster binding"/>
    <property type="evidence" value="ECO:0007669"/>
    <property type="project" value="UniProtKB-UniRule"/>
</dbReference>
<dbReference type="GO" id="GO:0016992">
    <property type="term" value="F:lipoate synthase activity"/>
    <property type="evidence" value="ECO:0007669"/>
    <property type="project" value="UniProtKB-UniRule"/>
</dbReference>
<dbReference type="GO" id="GO:0046872">
    <property type="term" value="F:metal ion binding"/>
    <property type="evidence" value="ECO:0007669"/>
    <property type="project" value="UniProtKB-KW"/>
</dbReference>
<dbReference type="CDD" id="cd01335">
    <property type="entry name" value="Radical_SAM"/>
    <property type="match status" value="1"/>
</dbReference>
<dbReference type="FunFam" id="3.20.20.70:FF:000023">
    <property type="entry name" value="Lipoyl synthase"/>
    <property type="match status" value="1"/>
</dbReference>
<dbReference type="Gene3D" id="3.20.20.70">
    <property type="entry name" value="Aldolase class I"/>
    <property type="match status" value="1"/>
</dbReference>
<dbReference type="HAMAP" id="MF_00206">
    <property type="entry name" value="Lipoyl_synth"/>
    <property type="match status" value="1"/>
</dbReference>
<dbReference type="InterPro" id="IPR013785">
    <property type="entry name" value="Aldolase_TIM"/>
</dbReference>
<dbReference type="InterPro" id="IPR006638">
    <property type="entry name" value="Elp3/MiaA/NifB-like_rSAM"/>
</dbReference>
<dbReference type="InterPro" id="IPR003698">
    <property type="entry name" value="Lipoyl_synth"/>
</dbReference>
<dbReference type="InterPro" id="IPR007197">
    <property type="entry name" value="rSAM"/>
</dbReference>
<dbReference type="NCBIfam" id="TIGR00510">
    <property type="entry name" value="lipA"/>
    <property type="match status" value="1"/>
</dbReference>
<dbReference type="NCBIfam" id="NF004019">
    <property type="entry name" value="PRK05481.1"/>
    <property type="match status" value="1"/>
</dbReference>
<dbReference type="NCBIfam" id="NF009544">
    <property type="entry name" value="PRK12928.1"/>
    <property type="match status" value="1"/>
</dbReference>
<dbReference type="PANTHER" id="PTHR10949">
    <property type="entry name" value="LIPOYL SYNTHASE"/>
    <property type="match status" value="1"/>
</dbReference>
<dbReference type="PANTHER" id="PTHR10949:SF0">
    <property type="entry name" value="LIPOYL SYNTHASE, MITOCHONDRIAL"/>
    <property type="match status" value="1"/>
</dbReference>
<dbReference type="Pfam" id="PF04055">
    <property type="entry name" value="Radical_SAM"/>
    <property type="match status" value="1"/>
</dbReference>
<dbReference type="PIRSF" id="PIRSF005963">
    <property type="entry name" value="Lipoyl_synth"/>
    <property type="match status" value="1"/>
</dbReference>
<dbReference type="SFLD" id="SFLDF00271">
    <property type="entry name" value="lipoyl_synthase"/>
    <property type="match status" value="1"/>
</dbReference>
<dbReference type="SFLD" id="SFLDS00029">
    <property type="entry name" value="Radical_SAM"/>
    <property type="match status" value="1"/>
</dbReference>
<dbReference type="SMART" id="SM00729">
    <property type="entry name" value="Elp3"/>
    <property type="match status" value="1"/>
</dbReference>
<dbReference type="SUPFAM" id="SSF102114">
    <property type="entry name" value="Radical SAM enzymes"/>
    <property type="match status" value="1"/>
</dbReference>
<dbReference type="PROSITE" id="PS51918">
    <property type="entry name" value="RADICAL_SAM"/>
    <property type="match status" value="1"/>
</dbReference>
<comment type="function">
    <text evidence="1">Catalyzes the radical-mediated insertion of two sulfur atoms into the C-6 and C-8 positions of the octanoyl moiety bound to the lipoyl domains of lipoate-dependent enzymes, thereby converting the octanoylated domains into lipoylated derivatives.</text>
</comment>
<comment type="catalytic activity">
    <reaction evidence="1">
        <text>[[Fe-S] cluster scaffold protein carrying a second [4Fe-4S](2+) cluster] + N(6)-octanoyl-L-lysyl-[protein] + 2 oxidized [2Fe-2S]-[ferredoxin] + 2 S-adenosyl-L-methionine + 4 H(+) = [[Fe-S] cluster scaffold protein] + N(6)-[(R)-dihydrolipoyl]-L-lysyl-[protein] + 4 Fe(3+) + 2 hydrogen sulfide + 2 5'-deoxyadenosine + 2 L-methionine + 2 reduced [2Fe-2S]-[ferredoxin]</text>
        <dbReference type="Rhea" id="RHEA:16585"/>
        <dbReference type="Rhea" id="RHEA-COMP:9928"/>
        <dbReference type="Rhea" id="RHEA-COMP:10000"/>
        <dbReference type="Rhea" id="RHEA-COMP:10001"/>
        <dbReference type="Rhea" id="RHEA-COMP:10475"/>
        <dbReference type="Rhea" id="RHEA-COMP:14568"/>
        <dbReference type="Rhea" id="RHEA-COMP:14569"/>
        <dbReference type="ChEBI" id="CHEBI:15378"/>
        <dbReference type="ChEBI" id="CHEBI:17319"/>
        <dbReference type="ChEBI" id="CHEBI:29034"/>
        <dbReference type="ChEBI" id="CHEBI:29919"/>
        <dbReference type="ChEBI" id="CHEBI:33722"/>
        <dbReference type="ChEBI" id="CHEBI:33737"/>
        <dbReference type="ChEBI" id="CHEBI:33738"/>
        <dbReference type="ChEBI" id="CHEBI:57844"/>
        <dbReference type="ChEBI" id="CHEBI:59789"/>
        <dbReference type="ChEBI" id="CHEBI:78809"/>
        <dbReference type="ChEBI" id="CHEBI:83100"/>
        <dbReference type="EC" id="2.8.1.8"/>
    </reaction>
</comment>
<comment type="cofactor">
    <cofactor evidence="1">
        <name>[4Fe-4S] cluster</name>
        <dbReference type="ChEBI" id="CHEBI:49883"/>
    </cofactor>
    <text evidence="1">Binds 2 [4Fe-4S] clusters per subunit. One cluster is coordinated with 3 cysteines and an exchangeable S-adenosyl-L-methionine.</text>
</comment>
<comment type="pathway">
    <text evidence="1">Protein modification; protein lipoylation via endogenous pathway; protein N(6)-(lipoyl)lysine from octanoyl-[acyl-carrier-protein]: step 2/2.</text>
</comment>
<comment type="subcellular location">
    <subcellularLocation>
        <location evidence="1">Cytoplasm</location>
    </subcellularLocation>
</comment>
<comment type="similarity">
    <text evidence="1">Belongs to the radical SAM superfamily. Lipoyl synthase family.</text>
</comment>
<organism>
    <name type="scientific">Shewanella denitrificans (strain OS217 / ATCC BAA-1090 / DSM 15013)</name>
    <dbReference type="NCBI Taxonomy" id="318161"/>
    <lineage>
        <taxon>Bacteria</taxon>
        <taxon>Pseudomonadati</taxon>
        <taxon>Pseudomonadota</taxon>
        <taxon>Gammaproteobacteria</taxon>
        <taxon>Alteromonadales</taxon>
        <taxon>Shewanellaceae</taxon>
        <taxon>Shewanella</taxon>
    </lineage>
</organism>
<evidence type="ECO:0000255" key="1">
    <source>
        <dbReference type="HAMAP-Rule" id="MF_00206"/>
    </source>
</evidence>
<evidence type="ECO:0000255" key="2">
    <source>
        <dbReference type="PROSITE-ProRule" id="PRU01266"/>
    </source>
</evidence>
<sequence length="321" mass="36313">MNRPERLQPGVKLRDADKVARIPVKIVPSERETMLRKPDWLRVKLPASNQRILEIKAALRKNGLHSVCEEASCPNLSECFNHGTATFMILGAICTRRCPFCDVAHGRPLKPDAEEPVKLAQTIRDMKLKYVVITSVDRDDLRDGGAQHFADCIREIRKLNPDIKIETLVPDFRGRIDAALDILSAEPPDVFNHNLETAPAHYRKARPGANYQWSLDLLKRFKERHPHIPTKSGLMMGLGETNEEIAEVLRDLRSHNVEMLTLGQYLQPSKFHLPVVRYVPPAEFDELKVLADELGFTHAACGPMVRSSYHADLQAQGKEVK</sequence>
<gene>
    <name evidence="1" type="primary">lipA</name>
    <name type="ordered locus">Sden_0867</name>
</gene>
<name>LIPA_SHEDO</name>
<reference key="1">
    <citation type="submission" date="2006-03" db="EMBL/GenBank/DDBJ databases">
        <title>Complete sequence of Shewanella denitrificans OS217.</title>
        <authorList>
            <consortium name="US DOE Joint Genome Institute"/>
            <person name="Copeland A."/>
            <person name="Lucas S."/>
            <person name="Lapidus A."/>
            <person name="Barry K."/>
            <person name="Detter J.C."/>
            <person name="Glavina del Rio T."/>
            <person name="Hammon N."/>
            <person name="Israni S."/>
            <person name="Dalin E."/>
            <person name="Tice H."/>
            <person name="Pitluck S."/>
            <person name="Brettin T."/>
            <person name="Bruce D."/>
            <person name="Han C."/>
            <person name="Tapia R."/>
            <person name="Gilna P."/>
            <person name="Kiss H."/>
            <person name="Schmutz J."/>
            <person name="Larimer F."/>
            <person name="Land M."/>
            <person name="Hauser L."/>
            <person name="Kyrpides N."/>
            <person name="Lykidis A."/>
            <person name="Richardson P."/>
        </authorList>
    </citation>
    <scope>NUCLEOTIDE SEQUENCE [LARGE SCALE GENOMIC DNA]</scope>
    <source>
        <strain>OS217 / ATCC BAA-1090 / DSM 15013</strain>
    </source>
</reference>